<sequence>MTSSIFRTIGIIGHSSYPKAINTYDVLYRWLYNKGIKVMIEQHASHLLRTHKAIIGNLHDIGDYADLAIVIGGDGNMLRAANVLSQYDIKIIGINLGNLGFLTDLNPHSALIELSKILSGHFINEKRFLLDIKIQHYNNVTILGTAINEVILYTNTIKNMIKFELYINNNFTFSSRSDGLIIATPTGSTAYALSAGGPILSPSVEGIVLVPICPHTVSSRPIIIDNKSTISLKFPKITPKLTIRCDNQNPIYIDKEKEIFIQRSNHILDLIHPNNYNYFKNLRIKLGWQKNSI</sequence>
<dbReference type="EC" id="2.7.1.23" evidence="1"/>
<dbReference type="EMBL" id="BX248583">
    <property type="protein sequence ID" value="CAD83231.1"/>
    <property type="molecule type" value="Genomic_DNA"/>
</dbReference>
<dbReference type="SMR" id="Q7VRQ5"/>
<dbReference type="STRING" id="203907.Bfl545"/>
<dbReference type="KEGG" id="bfl:Bfl545"/>
<dbReference type="eggNOG" id="COG0061">
    <property type="taxonomic scope" value="Bacteria"/>
</dbReference>
<dbReference type="HOGENOM" id="CLU_008831_0_1_6"/>
<dbReference type="OrthoDB" id="9774737at2"/>
<dbReference type="Proteomes" id="UP000002192">
    <property type="component" value="Chromosome"/>
</dbReference>
<dbReference type="GO" id="GO:0005737">
    <property type="term" value="C:cytoplasm"/>
    <property type="evidence" value="ECO:0007669"/>
    <property type="project" value="UniProtKB-SubCell"/>
</dbReference>
<dbReference type="GO" id="GO:0005524">
    <property type="term" value="F:ATP binding"/>
    <property type="evidence" value="ECO:0007669"/>
    <property type="project" value="UniProtKB-KW"/>
</dbReference>
<dbReference type="GO" id="GO:0046872">
    <property type="term" value="F:metal ion binding"/>
    <property type="evidence" value="ECO:0007669"/>
    <property type="project" value="UniProtKB-UniRule"/>
</dbReference>
<dbReference type="GO" id="GO:0051287">
    <property type="term" value="F:NAD binding"/>
    <property type="evidence" value="ECO:0007669"/>
    <property type="project" value="UniProtKB-ARBA"/>
</dbReference>
<dbReference type="GO" id="GO:0003951">
    <property type="term" value="F:NAD+ kinase activity"/>
    <property type="evidence" value="ECO:0007669"/>
    <property type="project" value="UniProtKB-UniRule"/>
</dbReference>
<dbReference type="GO" id="GO:0019674">
    <property type="term" value="P:NAD metabolic process"/>
    <property type="evidence" value="ECO:0007669"/>
    <property type="project" value="InterPro"/>
</dbReference>
<dbReference type="GO" id="GO:0006741">
    <property type="term" value="P:NADP biosynthetic process"/>
    <property type="evidence" value="ECO:0007669"/>
    <property type="project" value="UniProtKB-UniRule"/>
</dbReference>
<dbReference type="Gene3D" id="3.40.50.10330">
    <property type="entry name" value="Probable inorganic polyphosphate/atp-NAD kinase, domain 1"/>
    <property type="match status" value="1"/>
</dbReference>
<dbReference type="Gene3D" id="2.60.200.30">
    <property type="entry name" value="Probable inorganic polyphosphate/atp-NAD kinase, domain 2"/>
    <property type="match status" value="1"/>
</dbReference>
<dbReference type="HAMAP" id="MF_00361">
    <property type="entry name" value="NAD_kinase"/>
    <property type="match status" value="1"/>
</dbReference>
<dbReference type="InterPro" id="IPR017438">
    <property type="entry name" value="ATP-NAD_kinase_N"/>
</dbReference>
<dbReference type="InterPro" id="IPR017437">
    <property type="entry name" value="ATP-NAD_kinase_PpnK-typ_C"/>
</dbReference>
<dbReference type="InterPro" id="IPR016064">
    <property type="entry name" value="NAD/diacylglycerol_kinase_sf"/>
</dbReference>
<dbReference type="InterPro" id="IPR002504">
    <property type="entry name" value="NADK"/>
</dbReference>
<dbReference type="NCBIfam" id="NF002306">
    <property type="entry name" value="PRK01231.1"/>
    <property type="match status" value="1"/>
</dbReference>
<dbReference type="NCBIfam" id="NF002893">
    <property type="entry name" value="PRK03378.1"/>
    <property type="match status" value="1"/>
</dbReference>
<dbReference type="PANTHER" id="PTHR20275">
    <property type="entry name" value="NAD KINASE"/>
    <property type="match status" value="1"/>
</dbReference>
<dbReference type="PANTHER" id="PTHR20275:SF0">
    <property type="entry name" value="NAD KINASE"/>
    <property type="match status" value="1"/>
</dbReference>
<dbReference type="Pfam" id="PF01513">
    <property type="entry name" value="NAD_kinase"/>
    <property type="match status" value="1"/>
</dbReference>
<dbReference type="Pfam" id="PF20143">
    <property type="entry name" value="NAD_kinase_C"/>
    <property type="match status" value="1"/>
</dbReference>
<dbReference type="SUPFAM" id="SSF111331">
    <property type="entry name" value="NAD kinase/diacylglycerol kinase-like"/>
    <property type="match status" value="1"/>
</dbReference>
<name>NADK_BLOFL</name>
<gene>
    <name evidence="1" type="primary">nadK</name>
    <name type="ordered locus">Bfl545</name>
</gene>
<feature type="chain" id="PRO_0000229611" description="NAD kinase">
    <location>
        <begin position="1"/>
        <end position="293"/>
    </location>
</feature>
<feature type="active site" description="Proton acceptor" evidence="1">
    <location>
        <position position="74"/>
    </location>
</feature>
<feature type="binding site" evidence="1">
    <location>
        <begin position="74"/>
        <end position="75"/>
    </location>
    <ligand>
        <name>NAD(+)</name>
        <dbReference type="ChEBI" id="CHEBI:57540"/>
    </ligand>
</feature>
<feature type="binding site" evidence="1">
    <location>
        <position position="79"/>
    </location>
    <ligand>
        <name>NAD(+)</name>
        <dbReference type="ChEBI" id="CHEBI:57540"/>
    </ligand>
</feature>
<feature type="binding site" evidence="1">
    <location>
        <begin position="148"/>
        <end position="149"/>
    </location>
    <ligand>
        <name>NAD(+)</name>
        <dbReference type="ChEBI" id="CHEBI:57540"/>
    </ligand>
</feature>
<feature type="binding site" evidence="1">
    <location>
        <position position="176"/>
    </location>
    <ligand>
        <name>NAD(+)</name>
        <dbReference type="ChEBI" id="CHEBI:57540"/>
    </ligand>
</feature>
<feature type="binding site" evidence="1">
    <location>
        <position position="178"/>
    </location>
    <ligand>
        <name>NAD(+)</name>
        <dbReference type="ChEBI" id="CHEBI:57540"/>
    </ligand>
</feature>
<feature type="binding site" evidence="1">
    <location>
        <begin position="189"/>
        <end position="194"/>
    </location>
    <ligand>
        <name>NAD(+)</name>
        <dbReference type="ChEBI" id="CHEBI:57540"/>
    </ligand>
</feature>
<feature type="binding site" evidence="1">
    <location>
        <position position="248"/>
    </location>
    <ligand>
        <name>NAD(+)</name>
        <dbReference type="ChEBI" id="CHEBI:57540"/>
    </ligand>
</feature>
<keyword id="KW-0067">ATP-binding</keyword>
<keyword id="KW-0963">Cytoplasm</keyword>
<keyword id="KW-0418">Kinase</keyword>
<keyword id="KW-0520">NAD</keyword>
<keyword id="KW-0521">NADP</keyword>
<keyword id="KW-0547">Nucleotide-binding</keyword>
<keyword id="KW-1185">Reference proteome</keyword>
<keyword id="KW-0808">Transferase</keyword>
<evidence type="ECO:0000255" key="1">
    <source>
        <dbReference type="HAMAP-Rule" id="MF_00361"/>
    </source>
</evidence>
<organism>
    <name type="scientific">Blochmanniella floridana</name>
    <dbReference type="NCBI Taxonomy" id="203907"/>
    <lineage>
        <taxon>Bacteria</taxon>
        <taxon>Pseudomonadati</taxon>
        <taxon>Pseudomonadota</taxon>
        <taxon>Gammaproteobacteria</taxon>
        <taxon>Enterobacterales</taxon>
        <taxon>Enterobacteriaceae</taxon>
        <taxon>ant endosymbionts</taxon>
        <taxon>Candidatus Blochmanniella</taxon>
    </lineage>
</organism>
<reference key="1">
    <citation type="journal article" date="2003" name="Proc. Natl. Acad. Sci. U.S.A.">
        <title>The genome sequence of Blochmannia floridanus: comparative analysis of reduced genomes.</title>
        <authorList>
            <person name="Gil R."/>
            <person name="Silva F.J."/>
            <person name="Zientz E."/>
            <person name="Delmotte F."/>
            <person name="Gonzalez-Candelas F."/>
            <person name="Latorre A."/>
            <person name="Rausell C."/>
            <person name="Kamerbeek J."/>
            <person name="Gadau J."/>
            <person name="Hoelldobler B."/>
            <person name="van Ham R.C.H.J."/>
            <person name="Gross R."/>
            <person name="Moya A."/>
        </authorList>
    </citation>
    <scope>NUCLEOTIDE SEQUENCE [LARGE SCALE GENOMIC DNA]</scope>
</reference>
<proteinExistence type="inferred from homology"/>
<comment type="function">
    <text evidence="1">Involved in the regulation of the intracellular balance of NAD and NADP, and is a key enzyme in the biosynthesis of NADP. Catalyzes specifically the phosphorylation on 2'-hydroxyl of the adenosine moiety of NAD to yield NADP.</text>
</comment>
<comment type="catalytic activity">
    <reaction evidence="1">
        <text>NAD(+) + ATP = ADP + NADP(+) + H(+)</text>
        <dbReference type="Rhea" id="RHEA:18629"/>
        <dbReference type="ChEBI" id="CHEBI:15378"/>
        <dbReference type="ChEBI" id="CHEBI:30616"/>
        <dbReference type="ChEBI" id="CHEBI:57540"/>
        <dbReference type="ChEBI" id="CHEBI:58349"/>
        <dbReference type="ChEBI" id="CHEBI:456216"/>
        <dbReference type="EC" id="2.7.1.23"/>
    </reaction>
</comment>
<comment type="cofactor">
    <cofactor evidence="1">
        <name>a divalent metal cation</name>
        <dbReference type="ChEBI" id="CHEBI:60240"/>
    </cofactor>
</comment>
<comment type="subcellular location">
    <subcellularLocation>
        <location evidence="1">Cytoplasm</location>
    </subcellularLocation>
</comment>
<comment type="similarity">
    <text evidence="1">Belongs to the NAD kinase family.</text>
</comment>
<accession>Q7VRQ5</accession>
<protein>
    <recommendedName>
        <fullName evidence="1">NAD kinase</fullName>
        <ecNumber evidence="1">2.7.1.23</ecNumber>
    </recommendedName>
    <alternativeName>
        <fullName evidence="1">ATP-dependent NAD kinase</fullName>
    </alternativeName>
</protein>